<organism>
    <name type="scientific">Shewanella halifaxensis (strain HAW-EB4)</name>
    <dbReference type="NCBI Taxonomy" id="458817"/>
    <lineage>
        <taxon>Bacteria</taxon>
        <taxon>Pseudomonadati</taxon>
        <taxon>Pseudomonadota</taxon>
        <taxon>Gammaproteobacteria</taxon>
        <taxon>Alteromonadales</taxon>
        <taxon>Shewanellaceae</taxon>
        <taxon>Shewanella</taxon>
    </lineage>
</organism>
<comment type="function">
    <text evidence="1">Catalyzes the NADPH-dependent reduction of glutamyl-tRNA(Glu) to glutamate 1-semialdehyde (GSA).</text>
</comment>
<comment type="catalytic activity">
    <reaction evidence="1">
        <text>(S)-4-amino-5-oxopentanoate + tRNA(Glu) + NADP(+) = L-glutamyl-tRNA(Glu) + NADPH + H(+)</text>
        <dbReference type="Rhea" id="RHEA:12344"/>
        <dbReference type="Rhea" id="RHEA-COMP:9663"/>
        <dbReference type="Rhea" id="RHEA-COMP:9680"/>
        <dbReference type="ChEBI" id="CHEBI:15378"/>
        <dbReference type="ChEBI" id="CHEBI:57501"/>
        <dbReference type="ChEBI" id="CHEBI:57783"/>
        <dbReference type="ChEBI" id="CHEBI:58349"/>
        <dbReference type="ChEBI" id="CHEBI:78442"/>
        <dbReference type="ChEBI" id="CHEBI:78520"/>
        <dbReference type="EC" id="1.2.1.70"/>
    </reaction>
</comment>
<comment type="pathway">
    <text evidence="1">Porphyrin-containing compound metabolism; protoporphyrin-IX biosynthesis; 5-aminolevulinate from L-glutamyl-tRNA(Glu): step 1/2.</text>
</comment>
<comment type="subunit">
    <text evidence="1">Homodimer.</text>
</comment>
<comment type="domain">
    <text evidence="1">Possesses an unusual extended V-shaped dimeric structure with each monomer consisting of three distinct domains arranged along a curved 'spinal' alpha-helix. The N-terminal catalytic domain specifically recognizes the glutamate moiety of the substrate. The second domain is the NADPH-binding domain, and the third C-terminal domain is responsible for dimerization.</text>
</comment>
<comment type="miscellaneous">
    <text evidence="1">During catalysis, the active site Cys acts as a nucleophile attacking the alpha-carbonyl group of tRNA-bound glutamate with the formation of a thioester intermediate between enzyme and glutamate, and the concomitant release of tRNA(Glu). The thioester intermediate is finally reduced by direct hydride transfer from NADPH, to form the product GSA.</text>
</comment>
<comment type="similarity">
    <text evidence="1">Belongs to the glutamyl-tRNA reductase family.</text>
</comment>
<protein>
    <recommendedName>
        <fullName evidence="1">Glutamyl-tRNA reductase</fullName>
        <shortName evidence="1">GluTR</shortName>
        <ecNumber evidence="1">1.2.1.70</ecNumber>
    </recommendedName>
</protein>
<feature type="chain" id="PRO_1000075426" description="Glutamyl-tRNA reductase">
    <location>
        <begin position="1"/>
        <end position="416"/>
    </location>
</feature>
<feature type="active site" description="Nucleophile" evidence="1">
    <location>
        <position position="50"/>
    </location>
</feature>
<feature type="binding site" evidence="1">
    <location>
        <begin position="49"/>
        <end position="52"/>
    </location>
    <ligand>
        <name>substrate</name>
    </ligand>
</feature>
<feature type="binding site" evidence="1">
    <location>
        <position position="105"/>
    </location>
    <ligand>
        <name>substrate</name>
    </ligand>
</feature>
<feature type="binding site" evidence="1">
    <location>
        <begin position="110"/>
        <end position="112"/>
    </location>
    <ligand>
        <name>substrate</name>
    </ligand>
</feature>
<feature type="binding site" evidence="1">
    <location>
        <position position="116"/>
    </location>
    <ligand>
        <name>substrate</name>
    </ligand>
</feature>
<feature type="binding site" evidence="1">
    <location>
        <begin position="185"/>
        <end position="190"/>
    </location>
    <ligand>
        <name>NADP(+)</name>
        <dbReference type="ChEBI" id="CHEBI:58349"/>
    </ligand>
</feature>
<feature type="site" description="Important for activity" evidence="1">
    <location>
        <position position="95"/>
    </location>
</feature>
<dbReference type="EC" id="1.2.1.70" evidence="1"/>
<dbReference type="EMBL" id="CP000931">
    <property type="protein sequence ID" value="ABZ77759.1"/>
    <property type="molecule type" value="Genomic_DNA"/>
</dbReference>
<dbReference type="RefSeq" id="WP_012278282.1">
    <property type="nucleotide sequence ID" value="NC_010334.1"/>
</dbReference>
<dbReference type="SMR" id="B0TR28"/>
<dbReference type="STRING" id="458817.Shal_3212"/>
<dbReference type="KEGG" id="shl:Shal_3212"/>
<dbReference type="eggNOG" id="COG0373">
    <property type="taxonomic scope" value="Bacteria"/>
</dbReference>
<dbReference type="HOGENOM" id="CLU_035113_2_2_6"/>
<dbReference type="OrthoDB" id="110209at2"/>
<dbReference type="UniPathway" id="UPA00251">
    <property type="reaction ID" value="UER00316"/>
</dbReference>
<dbReference type="Proteomes" id="UP000001317">
    <property type="component" value="Chromosome"/>
</dbReference>
<dbReference type="GO" id="GO:0008883">
    <property type="term" value="F:glutamyl-tRNA reductase activity"/>
    <property type="evidence" value="ECO:0007669"/>
    <property type="project" value="UniProtKB-UniRule"/>
</dbReference>
<dbReference type="GO" id="GO:0050661">
    <property type="term" value="F:NADP binding"/>
    <property type="evidence" value="ECO:0007669"/>
    <property type="project" value="InterPro"/>
</dbReference>
<dbReference type="GO" id="GO:0019353">
    <property type="term" value="P:protoporphyrinogen IX biosynthetic process from glutamate"/>
    <property type="evidence" value="ECO:0007669"/>
    <property type="project" value="TreeGrafter"/>
</dbReference>
<dbReference type="CDD" id="cd05213">
    <property type="entry name" value="NAD_bind_Glutamyl_tRNA_reduct"/>
    <property type="match status" value="1"/>
</dbReference>
<dbReference type="FunFam" id="3.30.460.30:FF:000001">
    <property type="entry name" value="Glutamyl-tRNA reductase"/>
    <property type="match status" value="1"/>
</dbReference>
<dbReference type="FunFam" id="3.40.50.720:FF:000031">
    <property type="entry name" value="Glutamyl-tRNA reductase"/>
    <property type="match status" value="1"/>
</dbReference>
<dbReference type="Gene3D" id="3.30.460.30">
    <property type="entry name" value="Glutamyl-tRNA reductase, N-terminal domain"/>
    <property type="match status" value="1"/>
</dbReference>
<dbReference type="Gene3D" id="3.40.50.720">
    <property type="entry name" value="NAD(P)-binding Rossmann-like Domain"/>
    <property type="match status" value="1"/>
</dbReference>
<dbReference type="HAMAP" id="MF_00087">
    <property type="entry name" value="Glu_tRNA_reductase"/>
    <property type="match status" value="1"/>
</dbReference>
<dbReference type="InterPro" id="IPR000343">
    <property type="entry name" value="4pyrrol_synth_GluRdtase"/>
</dbReference>
<dbReference type="InterPro" id="IPR015896">
    <property type="entry name" value="4pyrrol_synth_GluRdtase_dimer"/>
</dbReference>
<dbReference type="InterPro" id="IPR015895">
    <property type="entry name" value="4pyrrol_synth_GluRdtase_N"/>
</dbReference>
<dbReference type="InterPro" id="IPR018214">
    <property type="entry name" value="GluRdtase_CS"/>
</dbReference>
<dbReference type="InterPro" id="IPR036453">
    <property type="entry name" value="GluRdtase_dimer_dom_sf"/>
</dbReference>
<dbReference type="InterPro" id="IPR036343">
    <property type="entry name" value="GluRdtase_N_sf"/>
</dbReference>
<dbReference type="InterPro" id="IPR036291">
    <property type="entry name" value="NAD(P)-bd_dom_sf"/>
</dbReference>
<dbReference type="InterPro" id="IPR006151">
    <property type="entry name" value="Shikm_DH/Glu-tRNA_Rdtase"/>
</dbReference>
<dbReference type="NCBIfam" id="TIGR01035">
    <property type="entry name" value="hemA"/>
    <property type="match status" value="1"/>
</dbReference>
<dbReference type="PANTHER" id="PTHR43013">
    <property type="entry name" value="GLUTAMYL-TRNA REDUCTASE"/>
    <property type="match status" value="1"/>
</dbReference>
<dbReference type="PANTHER" id="PTHR43013:SF1">
    <property type="entry name" value="GLUTAMYL-TRNA REDUCTASE"/>
    <property type="match status" value="1"/>
</dbReference>
<dbReference type="Pfam" id="PF00745">
    <property type="entry name" value="GlutR_dimer"/>
    <property type="match status" value="1"/>
</dbReference>
<dbReference type="Pfam" id="PF05201">
    <property type="entry name" value="GlutR_N"/>
    <property type="match status" value="1"/>
</dbReference>
<dbReference type="Pfam" id="PF01488">
    <property type="entry name" value="Shikimate_DH"/>
    <property type="match status" value="1"/>
</dbReference>
<dbReference type="PIRSF" id="PIRSF000445">
    <property type="entry name" value="4pyrrol_synth_GluRdtase"/>
    <property type="match status" value="1"/>
</dbReference>
<dbReference type="SUPFAM" id="SSF69742">
    <property type="entry name" value="Glutamyl tRNA-reductase catalytic, N-terminal domain"/>
    <property type="match status" value="1"/>
</dbReference>
<dbReference type="SUPFAM" id="SSF69075">
    <property type="entry name" value="Glutamyl tRNA-reductase dimerization domain"/>
    <property type="match status" value="1"/>
</dbReference>
<dbReference type="SUPFAM" id="SSF51735">
    <property type="entry name" value="NAD(P)-binding Rossmann-fold domains"/>
    <property type="match status" value="1"/>
</dbReference>
<dbReference type="PROSITE" id="PS00747">
    <property type="entry name" value="GLUTR"/>
    <property type="match status" value="1"/>
</dbReference>
<name>HEM1_SHEHH</name>
<sequence>MSLVAIGINHKTATVDLREKVAFAPDRIHDAMKSLASCTQSGEAVIISTCNRTELYCNNSEAADVVAWLEDYHQLSHEDVEPCLYQYKGQEAVKHLMRVSAGLDSLILGEPQILGQVKQSFVKAKEAGTVAATMDRMFQNTFSVAKKIRTETEIGAAAVSVAFAAVSMAKHIFSSLSTTQVLLVGAGETIELVARHLKDNGVKAMVVANRTISRAEAMCDEFGATAITLEQIPDFLPKADIVISSTASPLPILGKGMVEKALKQRRHQPMLLVDIAVPRDIEAEVADLDDAFLYTVDDLQSIIEQNMASRREAAEQAELIAEDQAYQFMEWIRSLESVDSIREYRTQSMAIKDELVERAVNKLAQGGNSEQVLLELANKLTNKLIHAPTQALTAASRQGDLNSLGQLRAVLGLDKD</sequence>
<proteinExistence type="inferred from homology"/>
<gene>
    <name evidence="1" type="primary">hemA</name>
    <name type="ordered locus">Shal_3212</name>
</gene>
<reference key="1">
    <citation type="submission" date="2008-01" db="EMBL/GenBank/DDBJ databases">
        <title>Complete sequence of Shewanella halifaxensis HAW-EB4.</title>
        <authorList>
            <consortium name="US DOE Joint Genome Institute"/>
            <person name="Copeland A."/>
            <person name="Lucas S."/>
            <person name="Lapidus A."/>
            <person name="Glavina del Rio T."/>
            <person name="Dalin E."/>
            <person name="Tice H."/>
            <person name="Bruce D."/>
            <person name="Goodwin L."/>
            <person name="Pitluck S."/>
            <person name="Sims D."/>
            <person name="Brettin T."/>
            <person name="Detter J.C."/>
            <person name="Han C."/>
            <person name="Kuske C.R."/>
            <person name="Schmutz J."/>
            <person name="Larimer F."/>
            <person name="Land M."/>
            <person name="Hauser L."/>
            <person name="Kyrpides N."/>
            <person name="Kim E."/>
            <person name="Zhao J.-S."/>
            <person name="Richardson P."/>
        </authorList>
    </citation>
    <scope>NUCLEOTIDE SEQUENCE [LARGE SCALE GENOMIC DNA]</scope>
    <source>
        <strain>HAW-EB4</strain>
    </source>
</reference>
<evidence type="ECO:0000255" key="1">
    <source>
        <dbReference type="HAMAP-Rule" id="MF_00087"/>
    </source>
</evidence>
<keyword id="KW-0521">NADP</keyword>
<keyword id="KW-0560">Oxidoreductase</keyword>
<keyword id="KW-0627">Porphyrin biosynthesis</keyword>
<accession>B0TR28</accession>